<name>ALT2_ALTSO</name>
<proteinExistence type="inferred from homology"/>
<evidence type="ECO:0000250" key="1">
    <source>
        <dbReference type="UniProtKB" id="P04798"/>
    </source>
</evidence>
<evidence type="ECO:0000255" key="2"/>
<evidence type="ECO:0000269" key="3">
    <source>
    </source>
</evidence>
<evidence type="ECO:0000303" key="4">
    <source>
    </source>
</evidence>
<evidence type="ECO:0000305" key="5"/>
<evidence type="ECO:0000305" key="6">
    <source>
    </source>
</evidence>
<protein>
    <recommendedName>
        <fullName evidence="4">Cytochrome P450 monooxygenase alt2</fullName>
        <ecNumber evidence="6">1.-.-.-</ecNumber>
    </recommendedName>
    <alternativeName>
        <fullName evidence="4">Alternapyrone biosynthesis cluster protein 2</fullName>
    </alternativeName>
</protein>
<dbReference type="EC" id="1.-.-.-" evidence="6"/>
<dbReference type="EMBL" id="AB120221">
    <property type="protein sequence ID" value="BAD83681.1"/>
    <property type="molecule type" value="Genomic_DNA"/>
</dbReference>
<dbReference type="SMR" id="Q5KTN2"/>
<dbReference type="GO" id="GO:0016020">
    <property type="term" value="C:membrane"/>
    <property type="evidence" value="ECO:0007669"/>
    <property type="project" value="UniProtKB-SubCell"/>
</dbReference>
<dbReference type="GO" id="GO:0020037">
    <property type="term" value="F:heme binding"/>
    <property type="evidence" value="ECO:0007669"/>
    <property type="project" value="InterPro"/>
</dbReference>
<dbReference type="GO" id="GO:0005506">
    <property type="term" value="F:iron ion binding"/>
    <property type="evidence" value="ECO:0007669"/>
    <property type="project" value="InterPro"/>
</dbReference>
<dbReference type="GO" id="GO:0004497">
    <property type="term" value="F:monooxygenase activity"/>
    <property type="evidence" value="ECO:0007669"/>
    <property type="project" value="UniProtKB-KW"/>
</dbReference>
<dbReference type="GO" id="GO:0016705">
    <property type="term" value="F:oxidoreductase activity, acting on paired donors, with incorporation or reduction of molecular oxygen"/>
    <property type="evidence" value="ECO:0007669"/>
    <property type="project" value="InterPro"/>
</dbReference>
<dbReference type="CDD" id="cd11063">
    <property type="entry name" value="CYP52"/>
    <property type="match status" value="1"/>
</dbReference>
<dbReference type="Gene3D" id="1.10.630.10">
    <property type="entry name" value="Cytochrome P450"/>
    <property type="match status" value="1"/>
</dbReference>
<dbReference type="InterPro" id="IPR001128">
    <property type="entry name" value="Cyt_P450"/>
</dbReference>
<dbReference type="InterPro" id="IPR017972">
    <property type="entry name" value="Cyt_P450_CS"/>
</dbReference>
<dbReference type="InterPro" id="IPR047146">
    <property type="entry name" value="Cyt_P450_E_CYP52_fungi"/>
</dbReference>
<dbReference type="InterPro" id="IPR002401">
    <property type="entry name" value="Cyt_P450_E_grp-I"/>
</dbReference>
<dbReference type="InterPro" id="IPR036396">
    <property type="entry name" value="Cyt_P450_sf"/>
</dbReference>
<dbReference type="PANTHER" id="PTHR24287">
    <property type="entry name" value="P450, PUTATIVE (EUROFUNG)-RELATED"/>
    <property type="match status" value="1"/>
</dbReference>
<dbReference type="PANTHER" id="PTHR24287:SF1">
    <property type="entry name" value="P450, PUTATIVE (EUROFUNG)-RELATED"/>
    <property type="match status" value="1"/>
</dbReference>
<dbReference type="Pfam" id="PF00067">
    <property type="entry name" value="p450"/>
    <property type="match status" value="1"/>
</dbReference>
<dbReference type="PRINTS" id="PR00463">
    <property type="entry name" value="EP450I"/>
</dbReference>
<dbReference type="PRINTS" id="PR00385">
    <property type="entry name" value="P450"/>
</dbReference>
<dbReference type="SUPFAM" id="SSF48264">
    <property type="entry name" value="Cytochrome P450"/>
    <property type="match status" value="1"/>
</dbReference>
<dbReference type="PROSITE" id="PS00086">
    <property type="entry name" value="CYTOCHROME_P450"/>
    <property type="match status" value="1"/>
</dbReference>
<organism>
    <name type="scientific">Alternaria solani</name>
    <dbReference type="NCBI Taxonomy" id="48100"/>
    <lineage>
        <taxon>Eukaryota</taxon>
        <taxon>Fungi</taxon>
        <taxon>Dikarya</taxon>
        <taxon>Ascomycota</taxon>
        <taxon>Pezizomycotina</taxon>
        <taxon>Dothideomycetes</taxon>
        <taxon>Pleosporomycetidae</taxon>
        <taxon>Pleosporales</taxon>
        <taxon>Pleosporineae</taxon>
        <taxon>Pleosporaceae</taxon>
        <taxon>Alternaria</taxon>
        <taxon>Alternaria sect. Porri</taxon>
    </lineage>
</organism>
<keyword id="KW-0349">Heme</keyword>
<keyword id="KW-0408">Iron</keyword>
<keyword id="KW-0472">Membrane</keyword>
<keyword id="KW-0479">Metal-binding</keyword>
<keyword id="KW-0503">Monooxygenase</keyword>
<keyword id="KW-0560">Oxidoreductase</keyword>
<keyword id="KW-0812">Transmembrane</keyword>
<keyword id="KW-1133">Transmembrane helix</keyword>
<accession>Q5KTN2</accession>
<comment type="function">
    <text evidence="3">Cytochrome P450 monooxygenase; part of the gene cluster that mediates the biosynthesis of alternapyrone derivatives (PubMed:16356847). Alternapyrone is a decaketide with octa-methylation from methionine on every C2 unit except the third unit (PubMed:16356847). All the domains in the polyketide synthase alt5 are apparently involved in alternapyrone synthesis, that is, the 8 CMeT, 7 KR, 7 DH, and 4 ER reactions in the 9 KS-mediated condensation steps required for alternapyrone synthesis (PubMed:16356847). the alternapyrone produced by alt5 might be intensively modified by cytochrome P450 monooxygenases alt1, alt2 and alt3 and FAD-dependent oxidoreductase alt4 present in the alt gene cluster (PubMed:16356847).</text>
</comment>
<comment type="cofactor">
    <cofactor evidence="1">
        <name>heme</name>
        <dbReference type="ChEBI" id="CHEBI:30413"/>
    </cofactor>
</comment>
<comment type="pathway">
    <text evidence="6">Secondary metabolite biosynthesis.</text>
</comment>
<comment type="subcellular location">
    <subcellularLocation>
        <location evidence="2">Membrane</location>
        <topology evidence="2">Single-pass membrane protein</topology>
    </subcellularLocation>
</comment>
<comment type="similarity">
    <text evidence="5">Belongs to the cytochrome P450 family.</text>
</comment>
<gene>
    <name evidence="4" type="primary">alt2</name>
</gene>
<sequence length="537" mass="60773">MQTHLLILAAVVLLIIHIVNNFLIKPLQTLLKSRRLGCGPVPFEPTRWPLDIDTIRRSLKADKEQRTPDFVAGRFETMGRYTWGLSLLGTSNLITAEPRNVQALLATQFDDFIMGTARRTNLKTALGRSIFAVDGKAWHRARETMRPIFSRENVSRLELLEEHVQTMLQIIETKDEGLTTDANDRAWSAPVSLAVLLPRLTMDSATELFLGQSTHSLKKALARQQQKSGNEEHDADSFDHAFERMLAILGTRMRLRSLYWLYGNKELQKCINALHAFVDSAIDAADQARKSGSSQLRYDFLETLRTRCSDRAEVREQVLGLLAAGRDTTASLTAWVFYCLVRNPRVYKKLRDTVLAEFGPYSTNPGQKITFEKLKGCTYLQHVLNETLRLHSVVPFNSRCAARDTTLPVGGGPDGSMPVFVPKGTEVNFSTHVLHRRKDLWGEDADEFVPERWEKKRPGMTWQYVPFNGGPRICIGQQFALTEAGYVLVRMVQRYDVIEGLDIDVERDWHNFTVVCSPGSPVARDAAVMCRLRVAVE</sequence>
<feature type="chain" id="PRO_0000444925" description="Cytochrome P450 monooxygenase alt2">
    <location>
        <begin position="1"/>
        <end position="537"/>
    </location>
</feature>
<feature type="transmembrane region" description="Helical" evidence="2">
    <location>
        <begin position="4"/>
        <end position="24"/>
    </location>
</feature>
<feature type="binding site" description="axial binding residue" evidence="1">
    <location>
        <position position="474"/>
    </location>
    <ligand>
        <name>heme</name>
        <dbReference type="ChEBI" id="CHEBI:30413"/>
    </ligand>
    <ligandPart>
        <name>Fe</name>
        <dbReference type="ChEBI" id="CHEBI:18248"/>
    </ligandPart>
</feature>
<reference key="1">
    <citation type="journal article" date="2005" name="Chem. Biol.">
        <title>An iterative type I polyketide synthase PKSN catalyzes synthesis of the decaketide alternapyrone with regio-specific octa-methylation.</title>
        <authorList>
            <person name="Fujii I."/>
            <person name="Yoshida N."/>
            <person name="Shimomaki S."/>
            <person name="Oikawa H."/>
            <person name="Ebizuka Y."/>
        </authorList>
    </citation>
    <scope>NUCLEOTIDE SEQUENCE [GENOMIC DNA]</scope>
    <scope>FUNCTION</scope>
    <source>
        <strain>584</strain>
    </source>
</reference>